<dbReference type="EC" id="3.4.21.88" evidence="1"/>
<dbReference type="EMBL" id="AL596168">
    <property type="protein sequence ID" value="CAC96571.1"/>
    <property type="molecule type" value="Genomic_DNA"/>
</dbReference>
<dbReference type="PIR" id="AC1600">
    <property type="entry name" value="AC1600"/>
</dbReference>
<dbReference type="RefSeq" id="WP_003762009.1">
    <property type="nucleotide sequence ID" value="NC_003212.1"/>
</dbReference>
<dbReference type="SMR" id="Q92C51"/>
<dbReference type="STRING" id="272626.gene:17565671"/>
<dbReference type="MEROPS" id="S24.001"/>
<dbReference type="GeneID" id="93234720"/>
<dbReference type="KEGG" id="lin:lin1340"/>
<dbReference type="eggNOG" id="COG1974">
    <property type="taxonomic scope" value="Bacteria"/>
</dbReference>
<dbReference type="HOGENOM" id="CLU_066192_45_1_9"/>
<dbReference type="OrthoDB" id="9802364at2"/>
<dbReference type="Proteomes" id="UP000002513">
    <property type="component" value="Chromosome"/>
</dbReference>
<dbReference type="GO" id="GO:0003677">
    <property type="term" value="F:DNA binding"/>
    <property type="evidence" value="ECO:0007669"/>
    <property type="project" value="UniProtKB-UniRule"/>
</dbReference>
<dbReference type="GO" id="GO:0004252">
    <property type="term" value="F:serine-type endopeptidase activity"/>
    <property type="evidence" value="ECO:0007669"/>
    <property type="project" value="UniProtKB-UniRule"/>
</dbReference>
<dbReference type="GO" id="GO:0006281">
    <property type="term" value="P:DNA repair"/>
    <property type="evidence" value="ECO:0007669"/>
    <property type="project" value="UniProtKB-UniRule"/>
</dbReference>
<dbReference type="GO" id="GO:0006260">
    <property type="term" value="P:DNA replication"/>
    <property type="evidence" value="ECO:0007669"/>
    <property type="project" value="UniProtKB-UniRule"/>
</dbReference>
<dbReference type="GO" id="GO:0045892">
    <property type="term" value="P:negative regulation of DNA-templated transcription"/>
    <property type="evidence" value="ECO:0007669"/>
    <property type="project" value="UniProtKB-UniRule"/>
</dbReference>
<dbReference type="GO" id="GO:0006508">
    <property type="term" value="P:proteolysis"/>
    <property type="evidence" value="ECO:0007669"/>
    <property type="project" value="InterPro"/>
</dbReference>
<dbReference type="GO" id="GO:0009432">
    <property type="term" value="P:SOS response"/>
    <property type="evidence" value="ECO:0007669"/>
    <property type="project" value="UniProtKB-UniRule"/>
</dbReference>
<dbReference type="CDD" id="cd00090">
    <property type="entry name" value="HTH_ARSR"/>
    <property type="match status" value="1"/>
</dbReference>
<dbReference type="CDD" id="cd06529">
    <property type="entry name" value="S24_LexA-like"/>
    <property type="match status" value="1"/>
</dbReference>
<dbReference type="FunFam" id="1.10.10.10:FF:000009">
    <property type="entry name" value="LexA repressor"/>
    <property type="match status" value="1"/>
</dbReference>
<dbReference type="FunFam" id="2.10.109.10:FF:000001">
    <property type="entry name" value="LexA repressor"/>
    <property type="match status" value="1"/>
</dbReference>
<dbReference type="Gene3D" id="2.10.109.10">
    <property type="entry name" value="Umud Fragment, subunit A"/>
    <property type="match status" value="1"/>
</dbReference>
<dbReference type="Gene3D" id="1.10.10.10">
    <property type="entry name" value="Winged helix-like DNA-binding domain superfamily/Winged helix DNA-binding domain"/>
    <property type="match status" value="1"/>
</dbReference>
<dbReference type="HAMAP" id="MF_00015">
    <property type="entry name" value="LexA"/>
    <property type="match status" value="1"/>
</dbReference>
<dbReference type="InterPro" id="IPR011991">
    <property type="entry name" value="ArsR-like_HTH"/>
</dbReference>
<dbReference type="InterPro" id="IPR006200">
    <property type="entry name" value="LexA"/>
</dbReference>
<dbReference type="InterPro" id="IPR039418">
    <property type="entry name" value="LexA-like"/>
</dbReference>
<dbReference type="InterPro" id="IPR036286">
    <property type="entry name" value="LexA/Signal_pep-like_sf"/>
</dbReference>
<dbReference type="InterPro" id="IPR006199">
    <property type="entry name" value="LexA_DNA-bd_dom"/>
</dbReference>
<dbReference type="InterPro" id="IPR050077">
    <property type="entry name" value="LexA_repressor"/>
</dbReference>
<dbReference type="InterPro" id="IPR006197">
    <property type="entry name" value="Peptidase_S24_LexA"/>
</dbReference>
<dbReference type="InterPro" id="IPR015927">
    <property type="entry name" value="Peptidase_S24_S26A/B/C"/>
</dbReference>
<dbReference type="InterPro" id="IPR036388">
    <property type="entry name" value="WH-like_DNA-bd_sf"/>
</dbReference>
<dbReference type="InterPro" id="IPR036390">
    <property type="entry name" value="WH_DNA-bd_sf"/>
</dbReference>
<dbReference type="NCBIfam" id="TIGR00498">
    <property type="entry name" value="lexA"/>
    <property type="match status" value="1"/>
</dbReference>
<dbReference type="PANTHER" id="PTHR33516">
    <property type="entry name" value="LEXA REPRESSOR"/>
    <property type="match status" value="1"/>
</dbReference>
<dbReference type="PANTHER" id="PTHR33516:SF2">
    <property type="entry name" value="LEXA REPRESSOR-RELATED"/>
    <property type="match status" value="1"/>
</dbReference>
<dbReference type="Pfam" id="PF01726">
    <property type="entry name" value="LexA_DNA_bind"/>
    <property type="match status" value="1"/>
</dbReference>
<dbReference type="Pfam" id="PF00717">
    <property type="entry name" value="Peptidase_S24"/>
    <property type="match status" value="1"/>
</dbReference>
<dbReference type="PRINTS" id="PR00726">
    <property type="entry name" value="LEXASERPTASE"/>
</dbReference>
<dbReference type="SUPFAM" id="SSF51306">
    <property type="entry name" value="LexA/Signal peptidase"/>
    <property type="match status" value="1"/>
</dbReference>
<dbReference type="SUPFAM" id="SSF46785">
    <property type="entry name" value="Winged helix' DNA-binding domain"/>
    <property type="match status" value="1"/>
</dbReference>
<name>LEXA_LISIN</name>
<accession>Q92C51</accession>
<comment type="function">
    <text evidence="1">Represses a number of genes involved in the response to DNA damage (SOS response), including recA and lexA. In the presence of single-stranded DNA, RecA interacts with LexA causing an autocatalytic cleavage which disrupts the DNA-binding part of LexA, leading to derepression of the SOS regulon and eventually DNA repair.</text>
</comment>
<comment type="catalytic activity">
    <reaction evidence="1">
        <text>Hydrolysis of Ala-|-Gly bond in repressor LexA.</text>
        <dbReference type="EC" id="3.4.21.88"/>
    </reaction>
</comment>
<comment type="subunit">
    <text evidence="1">Homodimer.</text>
</comment>
<comment type="similarity">
    <text evidence="1">Belongs to the peptidase S24 family.</text>
</comment>
<gene>
    <name evidence="1" type="primary">lexA</name>
    <name type="ordered locus">lin1340</name>
</gene>
<reference key="1">
    <citation type="journal article" date="2001" name="Science">
        <title>Comparative genomics of Listeria species.</title>
        <authorList>
            <person name="Glaser P."/>
            <person name="Frangeul L."/>
            <person name="Buchrieser C."/>
            <person name="Rusniok C."/>
            <person name="Amend A."/>
            <person name="Baquero F."/>
            <person name="Berche P."/>
            <person name="Bloecker H."/>
            <person name="Brandt P."/>
            <person name="Chakraborty T."/>
            <person name="Charbit A."/>
            <person name="Chetouani F."/>
            <person name="Couve E."/>
            <person name="de Daruvar A."/>
            <person name="Dehoux P."/>
            <person name="Domann E."/>
            <person name="Dominguez-Bernal G."/>
            <person name="Duchaud E."/>
            <person name="Durant L."/>
            <person name="Dussurget O."/>
            <person name="Entian K.-D."/>
            <person name="Fsihi H."/>
            <person name="Garcia-del Portillo F."/>
            <person name="Garrido P."/>
            <person name="Gautier L."/>
            <person name="Goebel W."/>
            <person name="Gomez-Lopez N."/>
            <person name="Hain T."/>
            <person name="Hauf J."/>
            <person name="Jackson D."/>
            <person name="Jones L.-M."/>
            <person name="Kaerst U."/>
            <person name="Kreft J."/>
            <person name="Kuhn M."/>
            <person name="Kunst F."/>
            <person name="Kurapkat G."/>
            <person name="Madueno E."/>
            <person name="Maitournam A."/>
            <person name="Mata Vicente J."/>
            <person name="Ng E."/>
            <person name="Nedjari H."/>
            <person name="Nordsiek G."/>
            <person name="Novella S."/>
            <person name="de Pablos B."/>
            <person name="Perez-Diaz J.-C."/>
            <person name="Purcell R."/>
            <person name="Remmel B."/>
            <person name="Rose M."/>
            <person name="Schlueter T."/>
            <person name="Simoes N."/>
            <person name="Tierrez A."/>
            <person name="Vazquez-Boland J.-A."/>
            <person name="Voss H."/>
            <person name="Wehland J."/>
            <person name="Cossart P."/>
        </authorList>
    </citation>
    <scope>NUCLEOTIDE SEQUENCE [LARGE SCALE GENOMIC DNA]</scope>
    <source>
        <strain>ATCC BAA-680 / CLIP 11262</strain>
    </source>
</reference>
<keyword id="KW-0068">Autocatalytic cleavage</keyword>
<keyword id="KW-0227">DNA damage</keyword>
<keyword id="KW-0234">DNA repair</keyword>
<keyword id="KW-0235">DNA replication</keyword>
<keyword id="KW-0238">DNA-binding</keyword>
<keyword id="KW-0378">Hydrolase</keyword>
<keyword id="KW-0678">Repressor</keyword>
<keyword id="KW-0742">SOS response</keyword>
<keyword id="KW-0804">Transcription</keyword>
<keyword id="KW-0805">Transcription regulation</keyword>
<organism>
    <name type="scientific">Listeria innocua serovar 6a (strain ATCC BAA-680 / CLIP 11262)</name>
    <dbReference type="NCBI Taxonomy" id="272626"/>
    <lineage>
        <taxon>Bacteria</taxon>
        <taxon>Bacillati</taxon>
        <taxon>Bacillota</taxon>
        <taxon>Bacilli</taxon>
        <taxon>Bacillales</taxon>
        <taxon>Listeriaceae</taxon>
        <taxon>Listeria</taxon>
    </lineage>
</organism>
<feature type="chain" id="PRO_0000170051" description="LexA repressor">
    <location>
        <begin position="1"/>
        <end position="204"/>
    </location>
</feature>
<feature type="DNA-binding region" description="H-T-H motif" evidence="1">
    <location>
        <begin position="27"/>
        <end position="47"/>
    </location>
</feature>
<feature type="active site" description="For autocatalytic cleavage activity" evidence="1">
    <location>
        <position position="126"/>
    </location>
</feature>
<feature type="active site" description="For autocatalytic cleavage activity" evidence="1">
    <location>
        <position position="164"/>
    </location>
</feature>
<feature type="site" description="Cleavage; by autolysis" evidence="1">
    <location>
        <begin position="90"/>
        <end position="91"/>
    </location>
</feature>
<protein>
    <recommendedName>
        <fullName evidence="1">LexA repressor</fullName>
        <ecNumber evidence="1">3.4.21.88</ecNumber>
    </recommendedName>
</protein>
<sequence>MKISKRQQDIYEFIKSEVKEKGYPPSVREIGEAVGLASSSTVHGHLARLEGKGLIRRDPTKPRAIEILSLEDEAETPNVVNIPIIGKVTAGMPITAIENIEEYFPLPEYMAAGETNVFMLEIDGESMINAGILDGDKVIVRQQSSAINGEIVVAMTDENEATCKRFYKEANHFRLQPENDALEPIILNNVTILGKVIGLYRDIH</sequence>
<proteinExistence type="inferred from homology"/>
<evidence type="ECO:0000255" key="1">
    <source>
        <dbReference type="HAMAP-Rule" id="MF_00015"/>
    </source>
</evidence>